<keyword id="KW-0004">4Fe-4S</keyword>
<keyword id="KW-0408">Iron</keyword>
<keyword id="KW-0411">Iron-sulfur</keyword>
<keyword id="KW-0414">Isoprene biosynthesis</keyword>
<keyword id="KW-0479">Metal-binding</keyword>
<keyword id="KW-0560">Oxidoreductase</keyword>
<keyword id="KW-1185">Reference proteome</keyword>
<name>ISPG_PICP2</name>
<proteinExistence type="inferred from homology"/>
<sequence>MQAVERPVQTTDSLVDTTIHRRKTRAVKVGNVTIGSDYPVVVQSMINEDTLDIEGSVAAIRRLHEIGCEIVRVTVPSMAHARSLAQIKAKLAETYQAVPIVADVHHNGMKIALEVAKHVDKVRINPGLYVFEQASGDRTGYTEAEFAAIGEKIRETLEPLVVSLRDQGKAMRIGVNHGSLAERMLFTYGDTPEGMVESALEFIRICQSLDFHNLIISMKASRVPVMLAAYRLMAKRMDELGMDYPLHLGVTEAGDGEYGRIKSTAGIGTLLAEGIGDTIRVSLTEAPEKEIPVCYSILQALGLRKTMVEYVACPSCGRTLFNLEEVLHKVREATNHLTGLDIAVMGCIVNGPGEMADADYGYVGKTPGVISLYRGREEIRKVPEAQGVEELINLIKADGRWVDPPQ</sequence>
<organism>
    <name type="scientific">Picosynechococcus sp. (strain ATCC 27264 / PCC 7002 / PR-6)</name>
    <name type="common">Agmenellum quadruplicatum</name>
    <dbReference type="NCBI Taxonomy" id="32049"/>
    <lineage>
        <taxon>Bacteria</taxon>
        <taxon>Bacillati</taxon>
        <taxon>Cyanobacteriota</taxon>
        <taxon>Cyanophyceae</taxon>
        <taxon>Oscillatoriophycideae</taxon>
        <taxon>Chroococcales</taxon>
        <taxon>Geminocystaceae</taxon>
        <taxon>Picosynechococcus</taxon>
    </lineage>
</organism>
<protein>
    <recommendedName>
        <fullName evidence="1">4-hydroxy-3-methylbut-2-en-1-yl diphosphate synthase (ferredoxin)</fullName>
        <ecNumber evidence="1">1.17.7.1</ecNumber>
    </recommendedName>
    <alternativeName>
        <fullName evidence="1">1-hydroxy-2-methyl-2-(E)-butenyl 4-diphosphate synthase</fullName>
    </alternativeName>
</protein>
<accession>B1XHZ7</accession>
<reference key="1">
    <citation type="submission" date="2008-02" db="EMBL/GenBank/DDBJ databases">
        <title>Complete sequence of Synechococcus sp. PCC 7002.</title>
        <authorList>
            <person name="Li T."/>
            <person name="Zhao J."/>
            <person name="Zhao C."/>
            <person name="Liu Z."/>
            <person name="Zhao F."/>
            <person name="Marquardt J."/>
            <person name="Nomura C.T."/>
            <person name="Persson S."/>
            <person name="Detter J.C."/>
            <person name="Richardson P.M."/>
            <person name="Lanz C."/>
            <person name="Schuster S.C."/>
            <person name="Wang J."/>
            <person name="Li S."/>
            <person name="Huang X."/>
            <person name="Cai T."/>
            <person name="Yu Z."/>
            <person name="Luo J."/>
            <person name="Zhao J."/>
            <person name="Bryant D.A."/>
        </authorList>
    </citation>
    <scope>NUCLEOTIDE SEQUENCE [LARGE SCALE GENOMIC DNA]</scope>
    <source>
        <strain>ATCC 27264 / PCC 7002 / PR-6</strain>
    </source>
</reference>
<feature type="chain" id="PRO_1000097191" description="4-hydroxy-3-methylbut-2-en-1-yl diphosphate synthase (ferredoxin)">
    <location>
        <begin position="1"/>
        <end position="406"/>
    </location>
</feature>
<feature type="binding site" evidence="1">
    <location>
        <position position="313"/>
    </location>
    <ligand>
        <name>[4Fe-4S] cluster</name>
        <dbReference type="ChEBI" id="CHEBI:49883"/>
    </ligand>
</feature>
<feature type="binding site" evidence="1">
    <location>
        <position position="316"/>
    </location>
    <ligand>
        <name>[4Fe-4S] cluster</name>
        <dbReference type="ChEBI" id="CHEBI:49883"/>
    </ligand>
</feature>
<feature type="binding site" evidence="1">
    <location>
        <position position="347"/>
    </location>
    <ligand>
        <name>[4Fe-4S] cluster</name>
        <dbReference type="ChEBI" id="CHEBI:49883"/>
    </ligand>
</feature>
<feature type="binding site" evidence="1">
    <location>
        <position position="354"/>
    </location>
    <ligand>
        <name>[4Fe-4S] cluster</name>
        <dbReference type="ChEBI" id="CHEBI:49883"/>
    </ligand>
</feature>
<evidence type="ECO:0000255" key="1">
    <source>
        <dbReference type="HAMAP-Rule" id="MF_00159"/>
    </source>
</evidence>
<dbReference type="EC" id="1.17.7.1" evidence="1"/>
<dbReference type="EMBL" id="CP000951">
    <property type="protein sequence ID" value="ACA98748.1"/>
    <property type="molecule type" value="Genomic_DNA"/>
</dbReference>
<dbReference type="RefSeq" id="WP_012306372.1">
    <property type="nucleotide sequence ID" value="NZ_JAHHPU010000001.1"/>
</dbReference>
<dbReference type="SMR" id="B1XHZ7"/>
<dbReference type="STRING" id="32049.SYNPCC7002_A0743"/>
<dbReference type="KEGG" id="syp:SYNPCC7002_A0743"/>
<dbReference type="eggNOG" id="COG0821">
    <property type="taxonomic scope" value="Bacteria"/>
</dbReference>
<dbReference type="HOGENOM" id="CLU_042258_0_0_3"/>
<dbReference type="UniPathway" id="UPA00056">
    <property type="reaction ID" value="UER00096"/>
</dbReference>
<dbReference type="Proteomes" id="UP000001688">
    <property type="component" value="Chromosome"/>
</dbReference>
<dbReference type="GO" id="GO:0051539">
    <property type="term" value="F:4 iron, 4 sulfur cluster binding"/>
    <property type="evidence" value="ECO:0007669"/>
    <property type="project" value="UniProtKB-UniRule"/>
</dbReference>
<dbReference type="GO" id="GO:0046429">
    <property type="term" value="F:4-hydroxy-3-methylbut-2-en-1-yl diphosphate synthase activity (ferredoxin)"/>
    <property type="evidence" value="ECO:0007669"/>
    <property type="project" value="UniProtKB-UniRule"/>
</dbReference>
<dbReference type="GO" id="GO:0005506">
    <property type="term" value="F:iron ion binding"/>
    <property type="evidence" value="ECO:0007669"/>
    <property type="project" value="InterPro"/>
</dbReference>
<dbReference type="GO" id="GO:0019288">
    <property type="term" value="P:isopentenyl diphosphate biosynthetic process, methylerythritol 4-phosphate pathway"/>
    <property type="evidence" value="ECO:0007669"/>
    <property type="project" value="UniProtKB-UniRule"/>
</dbReference>
<dbReference type="GO" id="GO:0016114">
    <property type="term" value="P:terpenoid biosynthetic process"/>
    <property type="evidence" value="ECO:0007669"/>
    <property type="project" value="InterPro"/>
</dbReference>
<dbReference type="FunFam" id="3.20.20.20:FF:000005">
    <property type="entry name" value="4-hydroxy-3-methylbut-2-en-1-yl diphosphate synthase (flavodoxin)"/>
    <property type="match status" value="1"/>
</dbReference>
<dbReference type="FunFam" id="3.30.413.10:FF:000006">
    <property type="entry name" value="4-hydroxy-3-methylbut-2-en-1-yl diphosphate synthase (flavodoxin)"/>
    <property type="match status" value="1"/>
</dbReference>
<dbReference type="Gene3D" id="3.20.20.20">
    <property type="entry name" value="Dihydropteroate synthase-like"/>
    <property type="match status" value="1"/>
</dbReference>
<dbReference type="Gene3D" id="3.30.413.10">
    <property type="entry name" value="Sulfite Reductase Hemoprotein, domain 1"/>
    <property type="match status" value="1"/>
</dbReference>
<dbReference type="HAMAP" id="MF_00159">
    <property type="entry name" value="IspG"/>
    <property type="match status" value="1"/>
</dbReference>
<dbReference type="InterPro" id="IPR011005">
    <property type="entry name" value="Dihydropteroate_synth-like_sf"/>
</dbReference>
<dbReference type="InterPro" id="IPR016425">
    <property type="entry name" value="IspG_bac"/>
</dbReference>
<dbReference type="InterPro" id="IPR004588">
    <property type="entry name" value="IspG_bac-typ"/>
</dbReference>
<dbReference type="InterPro" id="IPR045854">
    <property type="entry name" value="NO2/SO3_Rdtase_4Fe4S_sf"/>
</dbReference>
<dbReference type="NCBIfam" id="TIGR00612">
    <property type="entry name" value="ispG_gcpE"/>
    <property type="match status" value="1"/>
</dbReference>
<dbReference type="NCBIfam" id="NF001540">
    <property type="entry name" value="PRK00366.1"/>
    <property type="match status" value="1"/>
</dbReference>
<dbReference type="PANTHER" id="PTHR30454">
    <property type="entry name" value="4-HYDROXY-3-METHYLBUT-2-EN-1-YL DIPHOSPHATE SYNTHASE"/>
    <property type="match status" value="1"/>
</dbReference>
<dbReference type="PANTHER" id="PTHR30454:SF0">
    <property type="entry name" value="4-HYDROXY-3-METHYLBUT-2-EN-1-YL DIPHOSPHATE SYNTHASE (FERREDOXIN), CHLOROPLASTIC"/>
    <property type="match status" value="1"/>
</dbReference>
<dbReference type="Pfam" id="PF04551">
    <property type="entry name" value="GcpE"/>
    <property type="match status" value="1"/>
</dbReference>
<dbReference type="PIRSF" id="PIRSF004640">
    <property type="entry name" value="IspG"/>
    <property type="match status" value="1"/>
</dbReference>
<dbReference type="SUPFAM" id="SSF56014">
    <property type="entry name" value="Nitrite and sulphite reductase 4Fe-4S domain-like"/>
    <property type="match status" value="1"/>
</dbReference>
<comment type="function">
    <text evidence="1">Converts 2C-methyl-D-erythritol 2,4-cyclodiphosphate (ME-2,4cPP) into 1-hydroxy-2-methyl-2-(E)-butenyl 4-diphosphate.</text>
</comment>
<comment type="catalytic activity">
    <reaction evidence="1">
        <text>(2E)-4-hydroxy-3-methylbut-2-enyl diphosphate + 2 oxidized [2Fe-2S]-[ferredoxin] + H2O = 2-C-methyl-D-erythritol 2,4-cyclic diphosphate + 2 reduced [2Fe-2S]-[ferredoxin] + H(+)</text>
        <dbReference type="Rhea" id="RHEA:26119"/>
        <dbReference type="Rhea" id="RHEA-COMP:10000"/>
        <dbReference type="Rhea" id="RHEA-COMP:10001"/>
        <dbReference type="ChEBI" id="CHEBI:15377"/>
        <dbReference type="ChEBI" id="CHEBI:15378"/>
        <dbReference type="ChEBI" id="CHEBI:33737"/>
        <dbReference type="ChEBI" id="CHEBI:33738"/>
        <dbReference type="ChEBI" id="CHEBI:58483"/>
        <dbReference type="ChEBI" id="CHEBI:128753"/>
        <dbReference type="EC" id="1.17.7.1"/>
    </reaction>
</comment>
<comment type="cofactor">
    <cofactor evidence="1">
        <name>[4Fe-4S] cluster</name>
        <dbReference type="ChEBI" id="CHEBI:49883"/>
    </cofactor>
    <text evidence="1">Binds 1 [4Fe-4S] cluster.</text>
</comment>
<comment type="pathway">
    <text evidence="1">Isoprenoid biosynthesis; isopentenyl diphosphate biosynthesis via DXP pathway; isopentenyl diphosphate from 1-deoxy-D-xylulose 5-phosphate: step 5/6.</text>
</comment>
<comment type="similarity">
    <text evidence="1">Belongs to the IspG family.</text>
</comment>
<gene>
    <name evidence="1" type="primary">ispG</name>
    <name type="ordered locus">SYNPCC7002_A0743</name>
</gene>